<keyword id="KW-0963">Cytoplasm</keyword>
<keyword id="KW-0378">Hydrolase</keyword>
<keyword id="KW-0479">Metal-binding</keyword>
<keyword id="KW-0536">Nodulation</keyword>
<keyword id="KW-0614">Plasmid</keyword>
<keyword id="KW-1185">Reference proteome</keyword>
<geneLocation type="plasmid">
    <name>sym pNGR234a</name>
</geneLocation>
<proteinExistence type="inferred from homology"/>
<sequence>MKQLDYLRTVPRSGTGAPSVYLTFDDGPNPVFTPEVLDVLAEHRVPATFFVIGAYAKDRPQLIRRMVAQGHEVANHTMTHPDLSACGRRDVERQVLEANRAIRMACPEASVRHIRAPYGIWSDDVLTTSANAGLAAVHWSVDPRDWSRPGIDAIVDAVLASVRPGSIILLHDGCPPDELANTDASFRDQTVAALSRLIPALHDRGFIIRSLPQNH</sequence>
<name>NODB_SINFN</name>
<protein>
    <recommendedName>
        <fullName>Chitooligosaccharide deacetylase</fullName>
        <ecNumber>3.5.1.-</ecNumber>
    </recommendedName>
    <alternativeName>
        <fullName>Nodulation protein B</fullName>
    </alternativeName>
</protein>
<evidence type="ECO:0000250" key="1"/>
<evidence type="ECO:0000255" key="2">
    <source>
        <dbReference type="PROSITE-ProRule" id="PRU01014"/>
    </source>
</evidence>
<evidence type="ECO:0000305" key="3"/>
<comment type="function">
    <text>Is involved in generating a small heat-stable compound (Nod), an acylated oligomer of N-acetylglucosamine, that stimulates mitosis in various plant protoplasts.</text>
</comment>
<comment type="subcellular location">
    <subcellularLocation>
        <location>Cytoplasm</location>
    </subcellularLocation>
</comment>
<comment type="similarity">
    <text evidence="3">Belongs to the polysaccharide deacetylase family.</text>
</comment>
<gene>
    <name type="primary">nodB</name>
    <name type="ordered locus">NGR_a03420</name>
    <name type="ORF">y4hH</name>
</gene>
<organism>
    <name type="scientific">Sinorhizobium fredii (strain NBRC 101917 / NGR234)</name>
    <dbReference type="NCBI Taxonomy" id="394"/>
    <lineage>
        <taxon>Bacteria</taxon>
        <taxon>Pseudomonadati</taxon>
        <taxon>Pseudomonadota</taxon>
        <taxon>Alphaproteobacteria</taxon>
        <taxon>Hyphomicrobiales</taxon>
        <taxon>Rhizobiaceae</taxon>
        <taxon>Sinorhizobium/Ensifer group</taxon>
        <taxon>Sinorhizobium</taxon>
    </lineage>
</organism>
<dbReference type="EC" id="3.5.1.-"/>
<dbReference type="EMBL" id="X73362">
    <property type="protein sequence ID" value="CAA51773.1"/>
    <property type="molecule type" value="Genomic_DNA"/>
</dbReference>
<dbReference type="EMBL" id="U00090">
    <property type="protein sequence ID" value="AAB91696.1"/>
    <property type="molecule type" value="Genomic_DNA"/>
</dbReference>
<dbReference type="PIR" id="S34304">
    <property type="entry name" value="S34304"/>
</dbReference>
<dbReference type="RefSeq" id="NP_443884.1">
    <property type="nucleotide sequence ID" value="NC_000914.2"/>
</dbReference>
<dbReference type="RefSeq" id="WP_010875356.1">
    <property type="nucleotide sequence ID" value="NC_000914.2"/>
</dbReference>
<dbReference type="SMR" id="P50355"/>
<dbReference type="GeneID" id="48977544"/>
<dbReference type="KEGG" id="rhi:NGR_a03420"/>
<dbReference type="PATRIC" id="fig|394.7.peg.351"/>
<dbReference type="eggNOG" id="COG0726">
    <property type="taxonomic scope" value="Bacteria"/>
</dbReference>
<dbReference type="HOGENOM" id="CLU_021264_0_0_5"/>
<dbReference type="OrthoDB" id="9784220at2"/>
<dbReference type="Proteomes" id="UP000001054">
    <property type="component" value="Plasmid pNGR234a"/>
</dbReference>
<dbReference type="GO" id="GO:0005737">
    <property type="term" value="C:cytoplasm"/>
    <property type="evidence" value="ECO:0007669"/>
    <property type="project" value="UniProtKB-SubCell"/>
</dbReference>
<dbReference type="GO" id="GO:0016020">
    <property type="term" value="C:membrane"/>
    <property type="evidence" value="ECO:0007669"/>
    <property type="project" value="TreeGrafter"/>
</dbReference>
<dbReference type="GO" id="GO:0016810">
    <property type="term" value="F:hydrolase activity, acting on carbon-nitrogen (but not peptide) bonds"/>
    <property type="evidence" value="ECO:0007669"/>
    <property type="project" value="InterPro"/>
</dbReference>
<dbReference type="GO" id="GO:0046872">
    <property type="term" value="F:metal ion binding"/>
    <property type="evidence" value="ECO:0007669"/>
    <property type="project" value="UniProtKB-KW"/>
</dbReference>
<dbReference type="GO" id="GO:0005975">
    <property type="term" value="P:carbohydrate metabolic process"/>
    <property type="evidence" value="ECO:0007669"/>
    <property type="project" value="InterPro"/>
</dbReference>
<dbReference type="Gene3D" id="3.20.20.370">
    <property type="entry name" value="Glycoside hydrolase/deacetylase"/>
    <property type="match status" value="1"/>
</dbReference>
<dbReference type="InterPro" id="IPR011330">
    <property type="entry name" value="Glyco_hydro/deAcase_b/a-brl"/>
</dbReference>
<dbReference type="InterPro" id="IPR002509">
    <property type="entry name" value="NODB_dom"/>
</dbReference>
<dbReference type="InterPro" id="IPR026402">
    <property type="entry name" value="Nodulat_NodB"/>
</dbReference>
<dbReference type="InterPro" id="IPR050248">
    <property type="entry name" value="Polysacc_deacetylase_ArnD"/>
</dbReference>
<dbReference type="NCBIfam" id="TIGR04243">
    <property type="entry name" value="nodulat_NodB"/>
    <property type="match status" value="1"/>
</dbReference>
<dbReference type="PANTHER" id="PTHR10587:SF133">
    <property type="entry name" value="CHITIN DEACETYLASE 1-RELATED"/>
    <property type="match status" value="1"/>
</dbReference>
<dbReference type="PANTHER" id="PTHR10587">
    <property type="entry name" value="GLYCOSYL TRANSFERASE-RELATED"/>
    <property type="match status" value="1"/>
</dbReference>
<dbReference type="Pfam" id="PF01522">
    <property type="entry name" value="Polysacc_deac_1"/>
    <property type="match status" value="1"/>
</dbReference>
<dbReference type="SUPFAM" id="SSF88713">
    <property type="entry name" value="Glycoside hydrolase/deacetylase"/>
    <property type="match status" value="1"/>
</dbReference>
<dbReference type="PROSITE" id="PS51677">
    <property type="entry name" value="NODB"/>
    <property type="match status" value="1"/>
</dbReference>
<reference key="1">
    <citation type="journal article" date="1994" name="Mol. Microbiol.">
        <title>Nod factors of Rhizobium are a key to the legume door.</title>
        <authorList>
            <person name="Relic B."/>
            <person name="Perret X."/>
            <person name="Estrada-Garcia M.T."/>
            <person name="Kopcinska J."/>
            <person name="Golinowski W."/>
            <person name="Krishnan H.B."/>
            <person name="Pueppke S.G."/>
            <person name="Broughton W.J."/>
        </authorList>
    </citation>
    <scope>NUCLEOTIDE SEQUENCE [GENOMIC DNA]</scope>
</reference>
<reference key="2">
    <citation type="journal article" date="1997" name="Nature">
        <title>Molecular basis of symbiosis between Rhizobium and legumes.</title>
        <authorList>
            <person name="Freiberg C.A."/>
            <person name="Fellay R."/>
            <person name="Bairoch A."/>
            <person name="Broughton W.J."/>
            <person name="Rosenthal A."/>
            <person name="Perret X."/>
        </authorList>
    </citation>
    <scope>NUCLEOTIDE SEQUENCE [LARGE SCALE GENOMIC DNA]</scope>
    <source>
        <strain>NBRC 101917 / NGR234</strain>
    </source>
</reference>
<reference key="3">
    <citation type="journal article" date="2009" name="Appl. Environ. Microbiol.">
        <title>Rhizobium sp. strain NGR234 possesses a remarkable number of secretion systems.</title>
        <authorList>
            <person name="Schmeisser C."/>
            <person name="Liesegang H."/>
            <person name="Krysciak D."/>
            <person name="Bakkou N."/>
            <person name="Le Quere A."/>
            <person name="Wollherr A."/>
            <person name="Heinemeyer I."/>
            <person name="Morgenstern B."/>
            <person name="Pommerening-Roeser A."/>
            <person name="Flores M."/>
            <person name="Palacios R."/>
            <person name="Brenner S."/>
            <person name="Gottschalk G."/>
            <person name="Schmitz R.A."/>
            <person name="Broughton W.J."/>
            <person name="Perret X."/>
            <person name="Strittmatter A.W."/>
            <person name="Streit W.R."/>
        </authorList>
    </citation>
    <scope>NUCLEOTIDE SEQUENCE [LARGE SCALE GENOMIC DNA]</scope>
    <source>
        <strain>NBRC 101917 / NGR234</strain>
    </source>
</reference>
<feature type="chain" id="PRO_0000172756" description="Chitooligosaccharide deacetylase">
    <location>
        <begin position="1"/>
        <end position="215"/>
    </location>
</feature>
<feature type="domain" description="NodB homology" evidence="2">
    <location>
        <begin position="18"/>
        <end position="209"/>
    </location>
</feature>
<feature type="active site" description="Proton acceptor" evidence="1">
    <location>
        <position position="25"/>
    </location>
</feature>
<feature type="active site" description="Proton donor" evidence="1">
    <location>
        <position position="171"/>
    </location>
</feature>
<feature type="binding site" evidence="1">
    <location>
        <position position="76"/>
    </location>
    <ligand>
        <name>a divalent metal cation</name>
        <dbReference type="ChEBI" id="CHEBI:60240"/>
    </ligand>
</feature>
<feature type="binding site" evidence="1">
    <location>
        <position position="80"/>
    </location>
    <ligand>
        <name>a divalent metal cation</name>
        <dbReference type="ChEBI" id="CHEBI:60240"/>
    </ligand>
</feature>
<feature type="site" description="Raises pKa of active site His" evidence="1">
    <location>
        <position position="145"/>
    </location>
</feature>
<feature type="sequence conflict" description="In Ref. 1; CAA51773." evidence="3" ref="1">
    <original>RP</original>
    <variation>S</variation>
    <location>
        <begin position="148"/>
        <end position="149"/>
    </location>
</feature>
<accession>P50355</accession>